<feature type="chain" id="PRO_0000274188" description="3-isopropylmalate dehydratase large subunit">
    <location>
        <begin position="1"/>
        <end position="463"/>
    </location>
</feature>
<feature type="binding site" evidence="1">
    <location>
        <position position="347"/>
    </location>
    <ligand>
        <name>[4Fe-4S] cluster</name>
        <dbReference type="ChEBI" id="CHEBI:49883"/>
    </ligand>
</feature>
<feature type="binding site" evidence="1">
    <location>
        <position position="407"/>
    </location>
    <ligand>
        <name>[4Fe-4S] cluster</name>
        <dbReference type="ChEBI" id="CHEBI:49883"/>
    </ligand>
</feature>
<feature type="binding site" evidence="1">
    <location>
        <position position="410"/>
    </location>
    <ligand>
        <name>[4Fe-4S] cluster</name>
        <dbReference type="ChEBI" id="CHEBI:49883"/>
    </ligand>
</feature>
<sequence>MKTTLYQKIFDSHLIYEDKNTTPIIYIDLHLIHEVTSPQAFDGLRLKKRLVRNPLKTFATMDHNVSTISRKISDSKKMAKIQMRTLIKNCKDFNIPLYDLKNINQGIVHVIGPEQGMTLPGMTVVCGDSHTSTHGAFGALAFGIGTSEVEHVFATQTILQNRMKNMRISIYGNIKKNIFSKDIILNIINKIGTSGGTGYVVEFSGSVIKKMSMESRMTICNMAIEMGAKSGIIEPDAITYNYLKNKNFVPKNRSWKEYIRKWNNLKSGPKSFFEQDFSINISHISPQITWGTNPSQVIPINGKIPILKDIQDVNVREDTERSLEYMGLKPGTSLLNIPVDKVFIGSCTNSRIEDLRVVASVVQNKKISDNIEALIVPGSGLVKKQAEKEGLDKIFKNAGFQWRHAGCSMCLGMNEDQLKPYERCASTSNRNFEGRQGPKGRTHLMSPWLAAQTALYGKFVHIA</sequence>
<reference key="1">
    <citation type="journal article" date="2006" name="Gene">
        <title>Plasmids in the aphid endosymbiont Buchnera aphidicola with the smallest genomes. A puzzling evolutionary story.</title>
        <authorList>
            <person name="Gil R."/>
            <person name="Sabater-Munoz B."/>
            <person name="Perez-Brocal V."/>
            <person name="Silva F.J."/>
            <person name="Latorre A."/>
        </authorList>
    </citation>
    <scope>NUCLEOTIDE SEQUENCE [LARGE SCALE GENOMIC DNA]</scope>
    <source>
        <strain>Cc</strain>
    </source>
</reference>
<reference key="2">
    <citation type="journal article" date="2006" name="Science">
        <title>A small microbial genome: the end of a long symbiotic relationship?</title>
        <authorList>
            <person name="Perez-Brocal V."/>
            <person name="Gil R."/>
            <person name="Ramos S."/>
            <person name="Lamelas A."/>
            <person name="Postigo M."/>
            <person name="Michelena J.M."/>
            <person name="Silva F.J."/>
            <person name="Moya A."/>
            <person name="Latorre A."/>
        </authorList>
    </citation>
    <scope>NUCLEOTIDE SEQUENCE [LARGE SCALE GENOMIC DNA]</scope>
    <source>
        <strain>Cc</strain>
    </source>
</reference>
<organism>
    <name type="scientific">Buchnera aphidicola subsp. Cinara cedri (strain Cc)</name>
    <dbReference type="NCBI Taxonomy" id="372461"/>
    <lineage>
        <taxon>Bacteria</taxon>
        <taxon>Pseudomonadati</taxon>
        <taxon>Pseudomonadota</taxon>
        <taxon>Gammaproteobacteria</taxon>
        <taxon>Enterobacterales</taxon>
        <taxon>Erwiniaceae</taxon>
        <taxon>Buchnera</taxon>
    </lineage>
</organism>
<geneLocation type="plasmid">
    <name>pLeu-BCc</name>
</geneLocation>
<keyword id="KW-0004">4Fe-4S</keyword>
<keyword id="KW-0028">Amino-acid biosynthesis</keyword>
<keyword id="KW-0100">Branched-chain amino acid biosynthesis</keyword>
<keyword id="KW-0408">Iron</keyword>
<keyword id="KW-0411">Iron-sulfur</keyword>
<keyword id="KW-0432">Leucine biosynthesis</keyword>
<keyword id="KW-0456">Lyase</keyword>
<keyword id="KW-0479">Metal-binding</keyword>
<keyword id="KW-0614">Plasmid</keyword>
<keyword id="KW-1185">Reference proteome</keyword>
<accession>Q5WPZ8</accession>
<dbReference type="EC" id="4.2.1.33" evidence="1"/>
<dbReference type="EMBL" id="AY438025">
    <property type="protein sequence ID" value="AAR99735.1"/>
    <property type="molecule type" value="Genomic_DNA"/>
</dbReference>
<dbReference type="RefSeq" id="WP_012622904.1">
    <property type="nucleotide sequence ID" value="NC_011878.1"/>
</dbReference>
<dbReference type="SMR" id="Q5WPZ8"/>
<dbReference type="KEGG" id="bcc:leuC"/>
<dbReference type="eggNOG" id="COG0065">
    <property type="taxonomic scope" value="Bacteria"/>
</dbReference>
<dbReference type="HOGENOM" id="CLU_006714_3_4_6"/>
<dbReference type="OrthoDB" id="9802769at2"/>
<dbReference type="UniPathway" id="UPA00048">
    <property type="reaction ID" value="UER00071"/>
</dbReference>
<dbReference type="Proteomes" id="UP000000669">
    <property type="component" value="Plasmid pLeu-BCc"/>
</dbReference>
<dbReference type="GO" id="GO:0003861">
    <property type="term" value="F:3-isopropylmalate dehydratase activity"/>
    <property type="evidence" value="ECO:0007669"/>
    <property type="project" value="UniProtKB-UniRule"/>
</dbReference>
<dbReference type="GO" id="GO:0051539">
    <property type="term" value="F:4 iron, 4 sulfur cluster binding"/>
    <property type="evidence" value="ECO:0007669"/>
    <property type="project" value="UniProtKB-KW"/>
</dbReference>
<dbReference type="GO" id="GO:0046872">
    <property type="term" value="F:metal ion binding"/>
    <property type="evidence" value="ECO:0007669"/>
    <property type="project" value="UniProtKB-KW"/>
</dbReference>
<dbReference type="GO" id="GO:0009098">
    <property type="term" value="P:L-leucine biosynthetic process"/>
    <property type="evidence" value="ECO:0007669"/>
    <property type="project" value="UniProtKB-UniRule"/>
</dbReference>
<dbReference type="CDD" id="cd01583">
    <property type="entry name" value="IPMI"/>
    <property type="match status" value="1"/>
</dbReference>
<dbReference type="FunFam" id="3.30.499.10:FF:000007">
    <property type="entry name" value="3-isopropylmalate dehydratase large subunit"/>
    <property type="match status" value="1"/>
</dbReference>
<dbReference type="Gene3D" id="3.30.499.10">
    <property type="entry name" value="Aconitase, domain 3"/>
    <property type="match status" value="2"/>
</dbReference>
<dbReference type="HAMAP" id="MF_01026">
    <property type="entry name" value="LeuC_type1"/>
    <property type="match status" value="1"/>
</dbReference>
<dbReference type="InterPro" id="IPR004430">
    <property type="entry name" value="3-IsopropMal_deHydase_lsu"/>
</dbReference>
<dbReference type="InterPro" id="IPR015931">
    <property type="entry name" value="Acnase/IPM_dHydase_lsu_aba_1/3"/>
</dbReference>
<dbReference type="InterPro" id="IPR001030">
    <property type="entry name" value="Acoase/IPM_deHydtase_lsu_aba"/>
</dbReference>
<dbReference type="InterPro" id="IPR018136">
    <property type="entry name" value="Aconitase_4Fe-4S_BS"/>
</dbReference>
<dbReference type="InterPro" id="IPR036008">
    <property type="entry name" value="Aconitase_4Fe-4S_dom"/>
</dbReference>
<dbReference type="InterPro" id="IPR050067">
    <property type="entry name" value="IPM_dehydratase_rel_enz"/>
</dbReference>
<dbReference type="InterPro" id="IPR033941">
    <property type="entry name" value="IPMI_cat"/>
</dbReference>
<dbReference type="NCBIfam" id="TIGR00170">
    <property type="entry name" value="leuC"/>
    <property type="match status" value="1"/>
</dbReference>
<dbReference type="NCBIfam" id="NF004016">
    <property type="entry name" value="PRK05478.1"/>
    <property type="match status" value="1"/>
</dbReference>
<dbReference type="NCBIfam" id="NF009116">
    <property type="entry name" value="PRK12466.1"/>
    <property type="match status" value="1"/>
</dbReference>
<dbReference type="PANTHER" id="PTHR43822:SF9">
    <property type="entry name" value="3-ISOPROPYLMALATE DEHYDRATASE"/>
    <property type="match status" value="1"/>
</dbReference>
<dbReference type="PANTHER" id="PTHR43822">
    <property type="entry name" value="HOMOACONITASE, MITOCHONDRIAL-RELATED"/>
    <property type="match status" value="1"/>
</dbReference>
<dbReference type="Pfam" id="PF00330">
    <property type="entry name" value="Aconitase"/>
    <property type="match status" value="1"/>
</dbReference>
<dbReference type="PRINTS" id="PR00415">
    <property type="entry name" value="ACONITASE"/>
</dbReference>
<dbReference type="SUPFAM" id="SSF53732">
    <property type="entry name" value="Aconitase iron-sulfur domain"/>
    <property type="match status" value="1"/>
</dbReference>
<dbReference type="PROSITE" id="PS00450">
    <property type="entry name" value="ACONITASE_1"/>
    <property type="match status" value="1"/>
</dbReference>
<dbReference type="PROSITE" id="PS01244">
    <property type="entry name" value="ACONITASE_2"/>
    <property type="match status" value="1"/>
</dbReference>
<evidence type="ECO:0000255" key="1">
    <source>
        <dbReference type="HAMAP-Rule" id="MF_01026"/>
    </source>
</evidence>
<gene>
    <name evidence="1" type="primary">leuC</name>
    <name type="ordered locus">BCc_PL4</name>
</gene>
<comment type="function">
    <text evidence="1">Catalyzes the isomerization between 2-isopropylmalate and 3-isopropylmalate, via the formation of 2-isopropylmaleate.</text>
</comment>
<comment type="catalytic activity">
    <reaction evidence="1">
        <text>(2R,3S)-3-isopropylmalate = (2S)-2-isopropylmalate</text>
        <dbReference type="Rhea" id="RHEA:32287"/>
        <dbReference type="ChEBI" id="CHEBI:1178"/>
        <dbReference type="ChEBI" id="CHEBI:35121"/>
        <dbReference type="EC" id="4.2.1.33"/>
    </reaction>
</comment>
<comment type="cofactor">
    <cofactor evidence="1">
        <name>[4Fe-4S] cluster</name>
        <dbReference type="ChEBI" id="CHEBI:49883"/>
    </cofactor>
    <text evidence="1">Binds 1 [4Fe-4S] cluster per subunit.</text>
</comment>
<comment type="pathway">
    <text evidence="1">Amino-acid biosynthesis; L-leucine biosynthesis; L-leucine from 3-methyl-2-oxobutanoate: step 2/4.</text>
</comment>
<comment type="subunit">
    <text evidence="1">Heterodimer of LeuC and LeuD.</text>
</comment>
<comment type="similarity">
    <text evidence="1">Belongs to the aconitase/IPM isomerase family. LeuC type 1 subfamily.</text>
</comment>
<name>LEUC_BUCCC</name>
<protein>
    <recommendedName>
        <fullName evidence="1">3-isopropylmalate dehydratase large subunit</fullName>
        <ecNumber evidence="1">4.2.1.33</ecNumber>
    </recommendedName>
    <alternativeName>
        <fullName evidence="1">Alpha-IPM isomerase</fullName>
        <shortName evidence="1">IPMI</shortName>
    </alternativeName>
    <alternativeName>
        <fullName evidence="1">Isopropylmalate isomerase</fullName>
    </alternativeName>
</protein>
<proteinExistence type="inferred from homology"/>